<reference key="1">
    <citation type="submission" date="2008-10" db="EMBL/GenBank/DDBJ databases">
        <title>Genome sequence of Bacillus anthracis str. CDC 684.</title>
        <authorList>
            <person name="Dodson R.J."/>
            <person name="Munk A.C."/>
            <person name="Brettin T."/>
            <person name="Bruce D."/>
            <person name="Detter C."/>
            <person name="Tapia R."/>
            <person name="Han C."/>
            <person name="Sutton G."/>
            <person name="Sims D."/>
        </authorList>
    </citation>
    <scope>NUCLEOTIDE SEQUENCE [LARGE SCALE GENOMIC DNA]</scope>
    <source>
        <strain>CDC 684 / NRRL 3495</strain>
    </source>
</reference>
<dbReference type="EMBL" id="CP001215">
    <property type="protein sequence ID" value="ACP12767.1"/>
    <property type="molecule type" value="Genomic_DNA"/>
</dbReference>
<dbReference type="RefSeq" id="WP_001180010.1">
    <property type="nucleotide sequence ID" value="NC_012581.1"/>
</dbReference>
<dbReference type="KEGG" id="bah:BAMEG_3378"/>
<dbReference type="HOGENOM" id="CLU_142282_0_0_9"/>
<dbReference type="HAMAP" id="MF_01861">
    <property type="entry name" value="UPF0738"/>
    <property type="match status" value="1"/>
</dbReference>
<dbReference type="InterPro" id="IPR020908">
    <property type="entry name" value="UPF0738"/>
</dbReference>
<dbReference type="Pfam" id="PF19785">
    <property type="entry name" value="UPF0738"/>
    <property type="match status" value="1"/>
</dbReference>
<accession>C3LBS0</accession>
<comment type="similarity">
    <text evidence="1">Belongs to the UPF0738 family.</text>
</comment>
<sequence length="119" mass="13662">MQNKIQVKSVEKRENALIFCAENSEIEVKGLSARNHVLVDSDNLSFLYILENESSFIYVSIPHTCWEAMNNDVVMFVRVNDIEMELEGLKEEVEYLVENIEGNANYGEELVTAVEKVFL</sequence>
<name>Y3378_BACAC</name>
<evidence type="ECO:0000255" key="1">
    <source>
        <dbReference type="HAMAP-Rule" id="MF_01861"/>
    </source>
</evidence>
<feature type="chain" id="PRO_1000188707" description="UPF0738 protein BAMEG_3378">
    <location>
        <begin position="1"/>
        <end position="119"/>
    </location>
</feature>
<gene>
    <name type="ordered locus">BAMEG_3378</name>
</gene>
<organism>
    <name type="scientific">Bacillus anthracis (strain CDC 684 / NRRL 3495)</name>
    <dbReference type="NCBI Taxonomy" id="568206"/>
    <lineage>
        <taxon>Bacteria</taxon>
        <taxon>Bacillati</taxon>
        <taxon>Bacillota</taxon>
        <taxon>Bacilli</taxon>
        <taxon>Bacillales</taxon>
        <taxon>Bacillaceae</taxon>
        <taxon>Bacillus</taxon>
        <taxon>Bacillus cereus group</taxon>
    </lineage>
</organism>
<protein>
    <recommendedName>
        <fullName evidence="1">UPF0738 protein BAMEG_3378</fullName>
    </recommendedName>
</protein>
<proteinExistence type="inferred from homology"/>